<accession>P81557</accession>
<protein>
    <recommendedName>
        <fullName>Mucus envelope protein</fullName>
    </recommendedName>
</protein>
<organism evidence="2">
    <name type="scientific">Scarus vetula</name>
    <name type="common">Queen parrotfish</name>
    <dbReference type="NCBI Taxonomy" id="84543"/>
    <lineage>
        <taxon>Eukaryota</taxon>
        <taxon>Metazoa</taxon>
        <taxon>Chordata</taxon>
        <taxon>Craniata</taxon>
        <taxon>Vertebrata</taxon>
        <taxon>Euteleostomi</taxon>
        <taxon>Actinopterygii</taxon>
        <taxon>Neopterygii</taxon>
        <taxon>Teleostei</taxon>
        <taxon>Neoteleostei</taxon>
        <taxon>Acanthomorphata</taxon>
        <taxon>Eupercaria</taxon>
        <taxon>Labriformes</taxon>
        <taxon>Labridae</taxon>
        <taxon>Scarines</taxon>
        <taxon>Scarus</taxon>
    </lineage>
</organism>
<name>MUEP_SCAVE</name>
<evidence type="ECO:0000269" key="1">
    <source ref="1"/>
</evidence>
<evidence type="ECO:0000305" key="2"/>
<reference key="1">
    <citation type="journal article" date="1999" name="J. Fish Biol.">
        <title>Biochemical characteristics and antibiotic properties of the mucus envelope of the queen parrotfish.</title>
        <authorList>
            <person name="Videler H."/>
            <person name="Geertjes G.J."/>
            <person name="Videler J.J."/>
        </authorList>
    </citation>
    <scope>PROTEIN SEQUENCE</scope>
    <scope>FUNCTION</scope>
    <scope>TISSUE SPECIFICITY</scope>
    <scope>GLYCOSYLATION</scope>
    <source>
        <tissue evidence="2">Mucus cocoon</tissue>
    </source>
</reference>
<comment type="function">
    <text evidence="1">Exhibits antibacterial activity. May play a role in protection against parasite settlement.</text>
</comment>
<comment type="subcellular location">
    <subcellularLocation>
        <location evidence="2">Secreted</location>
    </subcellularLocation>
</comment>
<comment type="tissue specificity">
    <text evidence="1">Produced by the opercular gland in the gill cavity and secreted as part of the mucus cocoon.</text>
</comment>
<comment type="PTM">
    <text evidence="1">Glycosylated.</text>
</comment>
<keyword id="KW-0044">Antibiotic</keyword>
<keyword id="KW-0929">Antimicrobial</keyword>
<keyword id="KW-0903">Direct protein sequencing</keyword>
<keyword id="KW-0325">Glycoprotein</keyword>
<keyword id="KW-0964">Secreted</keyword>
<feature type="chain" id="PRO_0000096644" description="Mucus envelope protein">
    <location>
        <begin position="1"/>
        <end position="26" status="greater than"/>
    </location>
</feature>
<feature type="unsure residue" description="G or D" evidence="1">
    <location>
        <position position="6"/>
    </location>
</feature>
<feature type="unsure residue" description="R or Y" evidence="1">
    <location>
        <position position="9"/>
    </location>
</feature>
<feature type="unsure residue" description="P or E" evidence="1">
    <location>
        <position position="13"/>
    </location>
</feature>
<feature type="unsure residue" description="M or W" evidence="1">
    <location>
        <position position="16"/>
    </location>
</feature>
<feature type="unsure residue" evidence="1">
    <location>
        <position position="22"/>
    </location>
</feature>
<feature type="unsure residue" evidence="1">
    <location>
        <position position="23"/>
    </location>
</feature>
<feature type="unsure residue" description="R or K" evidence="1">
    <location>
        <position position="25"/>
    </location>
</feature>
<feature type="non-terminal residue" evidence="2">
    <location>
        <position position="26"/>
    </location>
</feature>
<proteinExistence type="evidence at protein level"/>
<sequence>KCCKKGGPRKCPPEGMTXFYERIFRI</sequence>
<dbReference type="GO" id="GO:0005576">
    <property type="term" value="C:extracellular region"/>
    <property type="evidence" value="ECO:0007669"/>
    <property type="project" value="UniProtKB-SubCell"/>
</dbReference>
<dbReference type="GO" id="GO:0042742">
    <property type="term" value="P:defense response to bacterium"/>
    <property type="evidence" value="ECO:0007669"/>
    <property type="project" value="UniProtKB-KW"/>
</dbReference>